<reference key="1">
    <citation type="journal article" date="1992" name="Proc. Natl. Acad. Sci. U.S.A.">
        <title>Evolutionary conservation pattern of zinc-finger domains of Drosophila segmentation genes.</title>
        <authorList>
            <person name="Sommer R.J."/>
            <person name="Retzlaff M."/>
            <person name="Goerlich K."/>
            <person name="Sander K."/>
            <person name="Tautz D."/>
        </authorList>
    </citation>
    <scope>NUCLEOTIDE SEQUENCE [GENOMIC DNA]</scope>
</reference>
<dbReference type="EMBL" id="L01593">
    <property type="protein sequence ID" value="AAA28267.1"/>
    <property type="molecule type" value="Genomic_DNA"/>
</dbReference>
<dbReference type="SMR" id="P31509"/>
<dbReference type="GO" id="GO:0005634">
    <property type="term" value="C:nucleus"/>
    <property type="evidence" value="ECO:0007669"/>
    <property type="project" value="UniProtKB-SubCell"/>
</dbReference>
<dbReference type="GO" id="GO:0000981">
    <property type="term" value="F:DNA-binding transcription factor activity, RNA polymerase II-specific"/>
    <property type="evidence" value="ECO:0007669"/>
    <property type="project" value="TreeGrafter"/>
</dbReference>
<dbReference type="GO" id="GO:0000978">
    <property type="term" value="F:RNA polymerase II cis-regulatory region sequence-specific DNA binding"/>
    <property type="evidence" value="ECO:0007669"/>
    <property type="project" value="TreeGrafter"/>
</dbReference>
<dbReference type="GO" id="GO:0008270">
    <property type="term" value="F:zinc ion binding"/>
    <property type="evidence" value="ECO:0007669"/>
    <property type="project" value="UniProtKB-KW"/>
</dbReference>
<dbReference type="FunFam" id="3.30.160.60:FF:000043">
    <property type="entry name" value="Scratch family zinc finger 2"/>
    <property type="match status" value="1"/>
</dbReference>
<dbReference type="Gene3D" id="3.30.160.60">
    <property type="entry name" value="Classic Zinc Finger"/>
    <property type="match status" value="2"/>
</dbReference>
<dbReference type="InterPro" id="IPR050527">
    <property type="entry name" value="Snail/Krueppel_Znf"/>
</dbReference>
<dbReference type="InterPro" id="IPR036236">
    <property type="entry name" value="Znf_C2H2_sf"/>
</dbReference>
<dbReference type="InterPro" id="IPR013087">
    <property type="entry name" value="Znf_C2H2_type"/>
</dbReference>
<dbReference type="PANTHER" id="PTHR24388:SF54">
    <property type="entry name" value="PROTEIN ESCARGOT"/>
    <property type="match status" value="1"/>
</dbReference>
<dbReference type="PANTHER" id="PTHR24388">
    <property type="entry name" value="ZINC FINGER PROTEIN"/>
    <property type="match status" value="1"/>
</dbReference>
<dbReference type="Pfam" id="PF00096">
    <property type="entry name" value="zf-C2H2"/>
    <property type="match status" value="1"/>
</dbReference>
<dbReference type="SMART" id="SM00355">
    <property type="entry name" value="ZnF_C2H2"/>
    <property type="match status" value="1"/>
</dbReference>
<dbReference type="SUPFAM" id="SSF57667">
    <property type="entry name" value="beta-beta-alpha zinc fingers"/>
    <property type="match status" value="1"/>
</dbReference>
<dbReference type="PROSITE" id="PS00028">
    <property type="entry name" value="ZINC_FINGER_C2H2_1"/>
    <property type="match status" value="1"/>
</dbReference>
<dbReference type="PROSITE" id="PS50157">
    <property type="entry name" value="ZINC_FINGER_C2H2_2"/>
    <property type="match status" value="1"/>
</dbReference>
<evidence type="ECO:0000255" key="1">
    <source>
        <dbReference type="PROSITE-ProRule" id="PRU00042"/>
    </source>
</evidence>
<evidence type="ECO:0000305" key="2"/>
<sequence length="46" mass="5360">IRTHTLPCKCHICGKAFSRPWLLQGHIRMHTGEKPFNCQHCQRAFA</sequence>
<keyword id="KW-0238">DNA-binding</keyword>
<keyword id="KW-0479">Metal-binding</keyword>
<keyword id="KW-0539">Nucleus</keyword>
<keyword id="KW-0677">Repeat</keyword>
<keyword id="KW-0862">Zinc</keyword>
<keyword id="KW-0863">Zinc-finger</keyword>
<organism>
    <name type="scientific">Cryptops anomalans</name>
    <name type="common">Centipede</name>
    <dbReference type="NCBI Taxonomy" id="1418174"/>
    <lineage>
        <taxon>Eukaryota</taxon>
        <taxon>Metazoa</taxon>
        <taxon>Ecdysozoa</taxon>
        <taxon>Arthropoda</taxon>
        <taxon>Myriapoda</taxon>
        <taxon>Chilopoda</taxon>
        <taxon>Pleurostigmophora</taxon>
        <taxon>Scolopendromorpha</taxon>
        <taxon>Cryptopidae</taxon>
        <taxon>Cryptops</taxon>
    </lineage>
</organism>
<protein>
    <recommendedName>
        <fullName>Escargot/snail protein homolog</fullName>
    </recommendedName>
</protein>
<name>ESCA_CRYAO</name>
<accession>P31509</accession>
<feature type="chain" id="PRO_0000047041" description="Escargot/snail protein homolog">
    <location>
        <begin position="1" status="less than"/>
        <end position="46" status="greater than"/>
    </location>
</feature>
<feature type="zinc finger region" description="C2H2-type 1" evidence="1">
    <location>
        <begin position="1" status="less than"/>
        <end position="4"/>
    </location>
</feature>
<feature type="zinc finger region" description="C2H2-type 2" evidence="1">
    <location>
        <begin position="8"/>
        <end position="30"/>
    </location>
</feature>
<feature type="zinc finger region" description="C2H2-type 3" evidence="1">
    <location>
        <begin position="36"/>
        <end position="46" status="greater than"/>
    </location>
</feature>
<feature type="non-terminal residue">
    <location>
        <position position="1"/>
    </location>
</feature>
<feature type="non-terminal residue">
    <location>
        <position position="46"/>
    </location>
</feature>
<proteinExistence type="inferred from homology"/>
<comment type="subcellular location">
    <subcellularLocation>
        <location evidence="2">Nucleus</location>
    </subcellularLocation>
</comment>
<comment type="similarity">
    <text evidence="2">Belongs to the snail C2H2-type zinc-finger protein family.</text>
</comment>